<protein>
    <recommendedName>
        <fullName evidence="1">Phosphatidylserine decarboxylase proenzyme</fullName>
        <ecNumber evidence="1">4.1.1.65</ecNumber>
    </recommendedName>
    <component>
        <recommendedName>
            <fullName evidence="1">Phosphatidylserine decarboxylase alpha chain</fullName>
        </recommendedName>
    </component>
    <component>
        <recommendedName>
            <fullName evidence="1">Phosphatidylserine decarboxylase beta chain</fullName>
        </recommendedName>
    </component>
</protein>
<dbReference type="EC" id="4.1.1.65" evidence="1"/>
<dbReference type="EMBL" id="CP001016">
    <property type="protein sequence ID" value="ACB95310.1"/>
    <property type="molecule type" value="Genomic_DNA"/>
</dbReference>
<dbReference type="RefSeq" id="WP_012384667.1">
    <property type="nucleotide sequence ID" value="NC_010581.1"/>
</dbReference>
<dbReference type="STRING" id="395963.Bind_1679"/>
<dbReference type="KEGG" id="bid:Bind_1679"/>
<dbReference type="eggNOG" id="COG0688">
    <property type="taxonomic scope" value="Bacteria"/>
</dbReference>
<dbReference type="HOGENOM" id="CLU_072492_0_0_5"/>
<dbReference type="OrthoDB" id="9790893at2"/>
<dbReference type="UniPathway" id="UPA00558">
    <property type="reaction ID" value="UER00616"/>
</dbReference>
<dbReference type="Proteomes" id="UP000001695">
    <property type="component" value="Chromosome"/>
</dbReference>
<dbReference type="GO" id="GO:0005886">
    <property type="term" value="C:plasma membrane"/>
    <property type="evidence" value="ECO:0007669"/>
    <property type="project" value="UniProtKB-SubCell"/>
</dbReference>
<dbReference type="GO" id="GO:0004609">
    <property type="term" value="F:phosphatidylserine decarboxylase activity"/>
    <property type="evidence" value="ECO:0007669"/>
    <property type="project" value="UniProtKB-UniRule"/>
</dbReference>
<dbReference type="GO" id="GO:0006646">
    <property type="term" value="P:phosphatidylethanolamine biosynthetic process"/>
    <property type="evidence" value="ECO:0007669"/>
    <property type="project" value="UniProtKB-UniRule"/>
</dbReference>
<dbReference type="HAMAP" id="MF_00664">
    <property type="entry name" value="PS_decarb_PSD_A"/>
    <property type="match status" value="1"/>
</dbReference>
<dbReference type="InterPro" id="IPR003817">
    <property type="entry name" value="PS_Dcarbxylase"/>
</dbReference>
<dbReference type="InterPro" id="IPR033175">
    <property type="entry name" value="PSD-A"/>
</dbReference>
<dbReference type="NCBIfam" id="NF003677">
    <property type="entry name" value="PRK05305.1-1"/>
    <property type="match status" value="1"/>
</dbReference>
<dbReference type="NCBIfam" id="NF003678">
    <property type="entry name" value="PRK05305.1-2"/>
    <property type="match status" value="1"/>
</dbReference>
<dbReference type="NCBIfam" id="NF003679">
    <property type="entry name" value="PRK05305.1-3"/>
    <property type="match status" value="1"/>
</dbReference>
<dbReference type="NCBIfam" id="NF003685">
    <property type="entry name" value="PRK05305.2-5"/>
    <property type="match status" value="1"/>
</dbReference>
<dbReference type="PANTHER" id="PTHR35809">
    <property type="entry name" value="ARCHAETIDYLSERINE DECARBOXYLASE PROENZYME-RELATED"/>
    <property type="match status" value="1"/>
</dbReference>
<dbReference type="PANTHER" id="PTHR35809:SF1">
    <property type="entry name" value="ARCHAETIDYLSERINE DECARBOXYLASE PROENZYME-RELATED"/>
    <property type="match status" value="1"/>
</dbReference>
<dbReference type="Pfam" id="PF02666">
    <property type="entry name" value="PS_Dcarbxylase"/>
    <property type="match status" value="1"/>
</dbReference>
<name>PSD_BEII9</name>
<sequence>MSILASIQRQVTPIHPEGYPFIGGFAVATLVLSWLWSPLGWLGLMATLWCAYFFRDPARLTPLDESIVISPADGIVSSVGYHMPPPELGLGAEPMQRISVFMSVFDCHVNRAPVTGRVTKIVYRPGLFLNADLDKASMDNERNGLVIENNNGRFGVVQIAGLVARRIVCFAEKGDHLTTGERFGLIRFGSRLDVYMPEGVRPLVGVGAKAVAGETILADRQTDKPRPAFRYG</sequence>
<reference key="1">
    <citation type="journal article" date="2010" name="J. Bacteriol.">
        <title>Complete genome sequence of Beijerinckia indica subsp. indica.</title>
        <authorList>
            <person name="Tamas I."/>
            <person name="Dedysh S.N."/>
            <person name="Liesack W."/>
            <person name="Stott M.B."/>
            <person name="Alam M."/>
            <person name="Murrell J.C."/>
            <person name="Dunfield P.F."/>
        </authorList>
    </citation>
    <scope>NUCLEOTIDE SEQUENCE [LARGE SCALE GENOMIC DNA]</scope>
    <source>
        <strain>ATCC 9039 / DSM 1715 / NCIMB 8712</strain>
    </source>
</reference>
<evidence type="ECO:0000255" key="1">
    <source>
        <dbReference type="HAMAP-Rule" id="MF_00664"/>
    </source>
</evidence>
<comment type="function">
    <text evidence="1">Catalyzes the formation of phosphatidylethanolamine (PtdEtn) from phosphatidylserine (PtdSer).</text>
</comment>
<comment type="catalytic activity">
    <reaction evidence="1">
        <text>a 1,2-diacyl-sn-glycero-3-phospho-L-serine + H(+) = a 1,2-diacyl-sn-glycero-3-phosphoethanolamine + CO2</text>
        <dbReference type="Rhea" id="RHEA:20828"/>
        <dbReference type="ChEBI" id="CHEBI:15378"/>
        <dbReference type="ChEBI" id="CHEBI:16526"/>
        <dbReference type="ChEBI" id="CHEBI:57262"/>
        <dbReference type="ChEBI" id="CHEBI:64612"/>
        <dbReference type="EC" id="4.1.1.65"/>
    </reaction>
</comment>
<comment type="cofactor">
    <cofactor evidence="1">
        <name>pyruvate</name>
        <dbReference type="ChEBI" id="CHEBI:15361"/>
    </cofactor>
    <text evidence="1">Binds 1 pyruvoyl group covalently per subunit.</text>
</comment>
<comment type="pathway">
    <text evidence="1">Phospholipid metabolism; phosphatidylethanolamine biosynthesis; phosphatidylethanolamine from CDP-diacylglycerol: step 2/2.</text>
</comment>
<comment type="subunit">
    <text evidence="1">Heterodimer of a large membrane-associated beta subunit and a small pyruvoyl-containing alpha subunit.</text>
</comment>
<comment type="subcellular location">
    <subcellularLocation>
        <location evidence="1">Cell membrane</location>
        <topology evidence="1">Peripheral membrane protein</topology>
    </subcellularLocation>
</comment>
<comment type="PTM">
    <text evidence="1">Is synthesized initially as an inactive proenzyme. Formation of the active enzyme involves a self-maturation process in which the active site pyruvoyl group is generated from an internal serine residue via an autocatalytic post-translational modification. Two non-identical subunits are generated from the proenzyme in this reaction, and the pyruvate is formed at the N-terminus of the alpha chain, which is derived from the carboxyl end of the proenzyme. The post-translation cleavage follows an unusual pathway, termed non-hydrolytic serinolysis, in which the side chain hydroxyl group of the serine supplies its oxygen atom to form the C-terminus of the beta chain, while the remainder of the serine residue undergoes an oxidative deamination to produce ammonia and the pyruvoyl prosthetic group on the alpha chain.</text>
</comment>
<comment type="similarity">
    <text evidence="1">Belongs to the phosphatidylserine decarboxylase family. PSD-A subfamily.</text>
</comment>
<gene>
    <name evidence="1" type="primary">psd</name>
    <name type="ordered locus">Bind_1679</name>
</gene>
<proteinExistence type="inferred from homology"/>
<accession>B2IC55</accession>
<feature type="chain" id="PRO_1000131440" description="Phosphatidylserine decarboxylase beta chain" evidence="1">
    <location>
        <begin position="1"/>
        <end position="189"/>
    </location>
</feature>
<feature type="chain" id="PRO_1000131441" description="Phosphatidylserine decarboxylase alpha chain" evidence="1">
    <location>
        <begin position="190"/>
        <end position="232"/>
    </location>
</feature>
<feature type="active site" description="Schiff-base intermediate with substrate; via pyruvic acid" evidence="1">
    <location>
        <position position="190"/>
    </location>
</feature>
<feature type="site" description="Cleavage (non-hydrolytic); by autocatalysis" evidence="1">
    <location>
        <begin position="189"/>
        <end position="190"/>
    </location>
</feature>
<feature type="modified residue" description="Pyruvic acid (Ser); by autocatalysis" evidence="1">
    <location>
        <position position="190"/>
    </location>
</feature>
<organism>
    <name type="scientific">Beijerinckia indica subsp. indica (strain ATCC 9039 / DSM 1715 / NCIMB 8712)</name>
    <dbReference type="NCBI Taxonomy" id="395963"/>
    <lineage>
        <taxon>Bacteria</taxon>
        <taxon>Pseudomonadati</taxon>
        <taxon>Pseudomonadota</taxon>
        <taxon>Alphaproteobacteria</taxon>
        <taxon>Hyphomicrobiales</taxon>
        <taxon>Beijerinckiaceae</taxon>
        <taxon>Beijerinckia</taxon>
    </lineage>
</organism>
<keyword id="KW-1003">Cell membrane</keyword>
<keyword id="KW-0210">Decarboxylase</keyword>
<keyword id="KW-0444">Lipid biosynthesis</keyword>
<keyword id="KW-0443">Lipid metabolism</keyword>
<keyword id="KW-0456">Lyase</keyword>
<keyword id="KW-0472">Membrane</keyword>
<keyword id="KW-0594">Phospholipid biosynthesis</keyword>
<keyword id="KW-1208">Phospholipid metabolism</keyword>
<keyword id="KW-0670">Pyruvate</keyword>
<keyword id="KW-1185">Reference proteome</keyword>
<keyword id="KW-0865">Zymogen</keyword>